<evidence type="ECO:0000255" key="1">
    <source>
        <dbReference type="HAMAP-Rule" id="MF_01523"/>
    </source>
</evidence>
<name>RSMJ_BUCAT</name>
<organism>
    <name type="scientific">Buchnera aphidicola subsp. Acyrthosiphon pisum (strain Tuc7)</name>
    <dbReference type="NCBI Taxonomy" id="561501"/>
    <lineage>
        <taxon>Bacteria</taxon>
        <taxon>Pseudomonadati</taxon>
        <taxon>Pseudomonadota</taxon>
        <taxon>Gammaproteobacteria</taxon>
        <taxon>Enterobacterales</taxon>
        <taxon>Erwiniaceae</taxon>
        <taxon>Buchnera</taxon>
    </lineage>
</organism>
<keyword id="KW-0963">Cytoplasm</keyword>
<keyword id="KW-0489">Methyltransferase</keyword>
<keyword id="KW-0698">rRNA processing</keyword>
<keyword id="KW-0949">S-adenosyl-L-methionine</keyword>
<keyword id="KW-0808">Transferase</keyword>
<dbReference type="EC" id="2.1.1.242" evidence="1"/>
<dbReference type="EMBL" id="CP001158">
    <property type="protein sequence ID" value="ACL30371.1"/>
    <property type="molecule type" value="Genomic_DNA"/>
</dbReference>
<dbReference type="RefSeq" id="WP_012619594.1">
    <property type="nucleotide sequence ID" value="NC_011834.1"/>
</dbReference>
<dbReference type="SMR" id="B8D8A6"/>
<dbReference type="KEGG" id="bau:BUAPTUC7_580"/>
<dbReference type="HOGENOM" id="CLU_076324_0_0_6"/>
<dbReference type="GO" id="GO:0005737">
    <property type="term" value="C:cytoplasm"/>
    <property type="evidence" value="ECO:0007669"/>
    <property type="project" value="UniProtKB-SubCell"/>
</dbReference>
<dbReference type="GO" id="GO:0008990">
    <property type="term" value="F:rRNA (guanine-N2-)-methyltransferase activity"/>
    <property type="evidence" value="ECO:0007669"/>
    <property type="project" value="UniProtKB-UniRule"/>
</dbReference>
<dbReference type="CDD" id="cd02440">
    <property type="entry name" value="AdoMet_MTases"/>
    <property type="match status" value="1"/>
</dbReference>
<dbReference type="Gene3D" id="3.40.50.150">
    <property type="entry name" value="Vaccinia Virus protein VP39"/>
    <property type="match status" value="1"/>
</dbReference>
<dbReference type="HAMAP" id="MF_01523">
    <property type="entry name" value="16SrRNA_methyltr_J"/>
    <property type="match status" value="1"/>
</dbReference>
<dbReference type="InterPro" id="IPR007536">
    <property type="entry name" value="16SrRNA_methylTrfase_J"/>
</dbReference>
<dbReference type="InterPro" id="IPR029063">
    <property type="entry name" value="SAM-dependent_MTases_sf"/>
</dbReference>
<dbReference type="PANTHER" id="PTHR36112">
    <property type="entry name" value="RIBOSOMAL RNA SMALL SUBUNIT METHYLTRANSFERASE J"/>
    <property type="match status" value="1"/>
</dbReference>
<dbReference type="PANTHER" id="PTHR36112:SF1">
    <property type="entry name" value="RIBOSOMAL RNA SMALL SUBUNIT METHYLTRANSFERASE J"/>
    <property type="match status" value="1"/>
</dbReference>
<dbReference type="Pfam" id="PF04445">
    <property type="entry name" value="SAM_MT"/>
    <property type="match status" value="1"/>
</dbReference>
<dbReference type="SUPFAM" id="SSF53335">
    <property type="entry name" value="S-adenosyl-L-methionine-dependent methyltransferases"/>
    <property type="match status" value="1"/>
</dbReference>
<protein>
    <recommendedName>
        <fullName evidence="1">Ribosomal RNA small subunit methyltransferase J</fullName>
        <ecNumber evidence="1">2.1.1.242</ecNumber>
    </recommendedName>
    <alternativeName>
        <fullName evidence="1">16S rRNA m2G1516 methyltransferase</fullName>
    </alternativeName>
    <alternativeName>
        <fullName evidence="1">rRNA (guanine-N(2)-)-methyltransferase</fullName>
    </alternativeName>
</protein>
<proteinExistence type="inferred from homology"/>
<feature type="chain" id="PRO_0000383376" description="Ribosomal RNA small subunit methyltransferase J">
    <location>
        <begin position="1"/>
        <end position="246"/>
    </location>
</feature>
<feature type="binding site" evidence="1">
    <location>
        <begin position="115"/>
        <end position="116"/>
    </location>
    <ligand>
        <name>S-adenosyl-L-methionine</name>
        <dbReference type="ChEBI" id="CHEBI:59789"/>
    </ligand>
</feature>
<feature type="binding site" evidence="1">
    <location>
        <position position="169"/>
    </location>
    <ligand>
        <name>S-adenosyl-L-methionine</name>
        <dbReference type="ChEBI" id="CHEBI:59789"/>
    </ligand>
</feature>
<sequence>MKIYLKFKSYNKRICKLLQLFKLEHDQNCSMGLLINHNSLELYNRENVNQKPIKVDFTSKKNHYRCHHFRRKNEVLYRVSGIKNSYFPTVLDATAGLGNDAFIFSFLGCKVIMIERHPIVAALLKDGLQRGYQDKKIGHWLQTRLHLIVNDSLKMLEIPILQPDVIYLDPMYPFYHKKSLPKKDMQFFRQLIGHNYDSKKLLEVSRKLAKNRIIVKRPYYAKPLSEDKVNHIVTTRNHRFDIYQPF</sequence>
<accession>B8D8A6</accession>
<gene>
    <name evidence="1" type="primary">rsmJ</name>
    <name type="ordered locus">BUAPTUC7_580</name>
</gene>
<comment type="function">
    <text evidence="1">Specifically methylates the guanosine in position 1516 of 16S rRNA.</text>
</comment>
<comment type="catalytic activity">
    <reaction evidence="1">
        <text>guanosine(1516) in 16S rRNA + S-adenosyl-L-methionine = N(2)-methylguanosine(1516) in 16S rRNA + S-adenosyl-L-homocysteine + H(+)</text>
        <dbReference type="Rhea" id="RHEA:43220"/>
        <dbReference type="Rhea" id="RHEA-COMP:10412"/>
        <dbReference type="Rhea" id="RHEA-COMP:10413"/>
        <dbReference type="ChEBI" id="CHEBI:15378"/>
        <dbReference type="ChEBI" id="CHEBI:57856"/>
        <dbReference type="ChEBI" id="CHEBI:59789"/>
        <dbReference type="ChEBI" id="CHEBI:74269"/>
        <dbReference type="ChEBI" id="CHEBI:74481"/>
        <dbReference type="EC" id="2.1.1.242"/>
    </reaction>
</comment>
<comment type="subcellular location">
    <subcellularLocation>
        <location evidence="1">Cytoplasm</location>
    </subcellularLocation>
</comment>
<comment type="similarity">
    <text evidence="1">Belongs to the methyltransferase superfamily. RsmJ family.</text>
</comment>
<reference key="1">
    <citation type="journal article" date="2009" name="Science">
        <title>The dynamics and time scale of ongoing genomic erosion in symbiotic bacteria.</title>
        <authorList>
            <person name="Moran N.A."/>
            <person name="McLaughlin H.J."/>
            <person name="Sorek R."/>
        </authorList>
    </citation>
    <scope>NUCLEOTIDE SEQUENCE [LARGE SCALE GENOMIC DNA]</scope>
    <source>
        <strain>Tuc7</strain>
    </source>
</reference>